<dbReference type="EMBL" id="CU928160">
    <property type="protein sequence ID" value="CAQ98734.1"/>
    <property type="molecule type" value="Genomic_DNA"/>
</dbReference>
<dbReference type="RefSeq" id="WP_000457334.1">
    <property type="nucleotide sequence ID" value="NC_011741.1"/>
</dbReference>
<dbReference type="SMR" id="B7M285"/>
<dbReference type="KEGG" id="ecr:ECIAI1_1880"/>
<dbReference type="HOGENOM" id="CLU_185263_0_0_6"/>
<dbReference type="HAMAP" id="MF_00507">
    <property type="entry name" value="UPF0181"/>
    <property type="match status" value="1"/>
</dbReference>
<dbReference type="InterPro" id="IPR005371">
    <property type="entry name" value="UPF0181"/>
</dbReference>
<dbReference type="NCBIfam" id="NF003476">
    <property type="entry name" value="PRK05114.1"/>
    <property type="match status" value="1"/>
</dbReference>
<dbReference type="Pfam" id="PF03701">
    <property type="entry name" value="UPF0181"/>
    <property type="match status" value="1"/>
</dbReference>
<evidence type="ECO:0000255" key="1">
    <source>
        <dbReference type="HAMAP-Rule" id="MF_00507"/>
    </source>
</evidence>
<protein>
    <recommendedName>
        <fullName evidence="1">UPF0181 protein YoaH</fullName>
    </recommendedName>
</protein>
<feature type="chain" id="PRO_1000127044" description="UPF0181 protein YoaH">
    <location>
        <begin position="1"/>
        <end position="59"/>
    </location>
</feature>
<organism>
    <name type="scientific">Escherichia coli O8 (strain IAI1)</name>
    <dbReference type="NCBI Taxonomy" id="585034"/>
    <lineage>
        <taxon>Bacteria</taxon>
        <taxon>Pseudomonadati</taxon>
        <taxon>Pseudomonadota</taxon>
        <taxon>Gammaproteobacteria</taxon>
        <taxon>Enterobacterales</taxon>
        <taxon>Enterobacteriaceae</taxon>
        <taxon>Escherichia</taxon>
    </lineage>
</organism>
<comment type="similarity">
    <text evidence="1">Belongs to the UPF0181 family.</text>
</comment>
<sequence length="59" mass="6554">MFAGLPSLTHEQQQKAVERIQELMAQGMSSGQAIALVAEELRANHSGERIVARFEDEDE</sequence>
<name>YOAH_ECO8A</name>
<reference key="1">
    <citation type="journal article" date="2009" name="PLoS Genet.">
        <title>Organised genome dynamics in the Escherichia coli species results in highly diverse adaptive paths.</title>
        <authorList>
            <person name="Touchon M."/>
            <person name="Hoede C."/>
            <person name="Tenaillon O."/>
            <person name="Barbe V."/>
            <person name="Baeriswyl S."/>
            <person name="Bidet P."/>
            <person name="Bingen E."/>
            <person name="Bonacorsi S."/>
            <person name="Bouchier C."/>
            <person name="Bouvet O."/>
            <person name="Calteau A."/>
            <person name="Chiapello H."/>
            <person name="Clermont O."/>
            <person name="Cruveiller S."/>
            <person name="Danchin A."/>
            <person name="Diard M."/>
            <person name="Dossat C."/>
            <person name="Karoui M.E."/>
            <person name="Frapy E."/>
            <person name="Garry L."/>
            <person name="Ghigo J.M."/>
            <person name="Gilles A.M."/>
            <person name="Johnson J."/>
            <person name="Le Bouguenec C."/>
            <person name="Lescat M."/>
            <person name="Mangenot S."/>
            <person name="Martinez-Jehanne V."/>
            <person name="Matic I."/>
            <person name="Nassif X."/>
            <person name="Oztas S."/>
            <person name="Petit M.A."/>
            <person name="Pichon C."/>
            <person name="Rouy Z."/>
            <person name="Ruf C.S."/>
            <person name="Schneider D."/>
            <person name="Tourret J."/>
            <person name="Vacherie B."/>
            <person name="Vallenet D."/>
            <person name="Medigue C."/>
            <person name="Rocha E.P.C."/>
            <person name="Denamur E."/>
        </authorList>
    </citation>
    <scope>NUCLEOTIDE SEQUENCE [LARGE SCALE GENOMIC DNA]</scope>
    <source>
        <strain>IAI1</strain>
    </source>
</reference>
<gene>
    <name evidence="1" type="primary">yoaH</name>
    <name type="ordered locus">ECIAI1_1880</name>
</gene>
<accession>B7M285</accession>
<proteinExistence type="inferred from homology"/>